<protein>
    <recommendedName>
        <fullName evidence="3 6">Putative neurotoxin 2</fullName>
    </recommendedName>
</protein>
<dbReference type="EMBL" id="JQ757074">
    <property type="protein sequence ID" value="AFM55021.1"/>
    <property type="molecule type" value="mRNA"/>
</dbReference>
<dbReference type="GO" id="GO:0005576">
    <property type="term" value="C:extracellular region"/>
    <property type="evidence" value="ECO:0007669"/>
    <property type="project" value="UniProtKB-SubCell"/>
</dbReference>
<dbReference type="GO" id="GO:0090729">
    <property type="term" value="F:toxin activity"/>
    <property type="evidence" value="ECO:0007669"/>
    <property type="project" value="UniProtKB-KW"/>
</dbReference>
<evidence type="ECO:0000250" key="1">
    <source>
        <dbReference type="UniProtKB" id="I6S3A5"/>
    </source>
</evidence>
<evidence type="ECO:0000255" key="2"/>
<evidence type="ECO:0000303" key="3">
    <source>
    </source>
</evidence>
<evidence type="ECO:0000305" key="4"/>
<evidence type="ECO:0000305" key="5">
    <source>
    </source>
</evidence>
<evidence type="ECO:0000312" key="6">
    <source>
        <dbReference type="EMBL" id="AFM55021.1"/>
    </source>
</evidence>
<name>PNX32_SCOMU</name>
<accession>I6R1S1</accession>
<keyword id="KW-1015">Disulfide bond</keyword>
<keyword id="KW-0528">Neurotoxin</keyword>
<keyword id="KW-0964">Secreted</keyword>
<keyword id="KW-0732">Signal</keyword>
<keyword id="KW-0800">Toxin</keyword>
<organism>
    <name type="scientific">Scolopendra mutilans</name>
    <name type="common">Chinese red-headed centipede</name>
    <name type="synonym">Scolopendra subspinipes mutilans</name>
    <dbReference type="NCBI Taxonomy" id="2836329"/>
    <lineage>
        <taxon>Eukaryota</taxon>
        <taxon>Metazoa</taxon>
        <taxon>Ecdysozoa</taxon>
        <taxon>Arthropoda</taxon>
        <taxon>Myriapoda</taxon>
        <taxon>Chilopoda</taxon>
        <taxon>Pleurostigmophora</taxon>
        <taxon>Scolopendromorpha</taxon>
        <taxon>Scolopendridae</taxon>
        <taxon>Scolopendra</taxon>
    </lineage>
</organism>
<comment type="subcellular location">
    <subcellularLocation>
        <location evidence="5">Secreted</location>
    </subcellularLocation>
</comment>
<comment type="tissue specificity">
    <text evidence="5">Expressed by the venom gland.</text>
</comment>
<comment type="PTM">
    <text evidence="4">Contains 2 disulfide bonds.</text>
</comment>
<comment type="similarity">
    <text evidence="4">Belongs to the scolopendra neurotoxin 3 family.</text>
</comment>
<sequence>MKAFIVILSIAIVLLLIVSIKETSAKDCKQECVKRYTNGDFTNFFKVEYGPERRGGKCYCEFTCRVKFYIHLKHEMN</sequence>
<reference key="1">
    <citation type="journal article" date="2012" name="Mol. Cell. Proteomics">
        <title>Chemical punch packed in venoms makes centipedes excellent predators.</title>
        <authorList>
            <person name="Yang S."/>
            <person name="Liu Z."/>
            <person name="Xiao Y."/>
            <person name="Li Y."/>
            <person name="Rong M."/>
            <person name="Liang S."/>
            <person name="Zhang Z."/>
            <person name="Yu H."/>
            <person name="King G.F."/>
            <person name="Lai R."/>
        </authorList>
    </citation>
    <scope>NUCLEOTIDE SEQUENCE [MRNA]</scope>
    <source>
        <tissue>Venom gland</tissue>
    </source>
</reference>
<proteinExistence type="inferred from homology"/>
<feature type="signal peptide" evidence="2">
    <location>
        <begin position="1"/>
        <end position="25"/>
    </location>
</feature>
<feature type="propeptide" id="PRO_0000425488" evidence="1">
    <location>
        <begin position="26"/>
        <end position="46"/>
    </location>
</feature>
<feature type="peptide" id="PRO_0000425489" description="Putative neurotoxin 2" evidence="1">
    <location>
        <begin position="47"/>
        <end position="77"/>
    </location>
</feature>